<gene>
    <name evidence="1 28" type="primary">rne</name>
    <name evidence="27" type="synonym">ams</name>
    <name type="synonym">hmp1</name>
    <name type="ordered locus">b1084</name>
    <name type="ordered locus">JW1071</name>
</gene>
<evidence type="ECO:0000255" key="1">
    <source>
        <dbReference type="HAMAP-Rule" id="MF_00970"/>
    </source>
</evidence>
<evidence type="ECO:0000256" key="2">
    <source>
        <dbReference type="SAM" id="MobiDB-lite"/>
    </source>
</evidence>
<evidence type="ECO:0000269" key="3">
    <source>
    </source>
</evidence>
<evidence type="ECO:0000269" key="4">
    <source>
    </source>
</evidence>
<evidence type="ECO:0000269" key="5">
    <source>
    </source>
</evidence>
<evidence type="ECO:0000269" key="6">
    <source>
    </source>
</evidence>
<evidence type="ECO:0000269" key="7">
    <source>
    </source>
</evidence>
<evidence type="ECO:0000269" key="8">
    <source>
    </source>
</evidence>
<evidence type="ECO:0000269" key="9">
    <source>
    </source>
</evidence>
<evidence type="ECO:0000269" key="10">
    <source>
    </source>
</evidence>
<evidence type="ECO:0000269" key="11">
    <source>
    </source>
</evidence>
<evidence type="ECO:0000269" key="12">
    <source>
    </source>
</evidence>
<evidence type="ECO:0000269" key="13">
    <source>
    </source>
</evidence>
<evidence type="ECO:0000269" key="14">
    <source>
    </source>
</evidence>
<evidence type="ECO:0000269" key="15">
    <source>
    </source>
</evidence>
<evidence type="ECO:0000269" key="16">
    <source>
    </source>
</evidence>
<evidence type="ECO:0000269" key="17">
    <source>
    </source>
</evidence>
<evidence type="ECO:0000269" key="18">
    <source>
    </source>
</evidence>
<evidence type="ECO:0000269" key="19">
    <source>
    </source>
</evidence>
<evidence type="ECO:0000269" key="20">
    <source>
    </source>
</evidence>
<evidence type="ECO:0000269" key="21">
    <source>
    </source>
</evidence>
<evidence type="ECO:0000269" key="22">
    <source>
    </source>
</evidence>
<evidence type="ECO:0000269" key="23">
    <source>
    </source>
</evidence>
<evidence type="ECO:0000269" key="24">
    <source>
    </source>
</evidence>
<evidence type="ECO:0000269" key="25">
    <source>
    </source>
</evidence>
<evidence type="ECO:0000269" key="26">
    <source>
    </source>
</evidence>
<evidence type="ECO:0000303" key="27">
    <source>
    </source>
</evidence>
<evidence type="ECO:0000303" key="28">
    <source>
    </source>
</evidence>
<evidence type="ECO:0000305" key="29"/>
<evidence type="ECO:0007829" key="30">
    <source>
        <dbReference type="PDB" id="1SLJ"/>
    </source>
</evidence>
<evidence type="ECO:0007829" key="31">
    <source>
        <dbReference type="PDB" id="1SMX"/>
    </source>
</evidence>
<evidence type="ECO:0007829" key="32">
    <source>
        <dbReference type="PDB" id="2BX2"/>
    </source>
</evidence>
<evidence type="ECO:0007829" key="33">
    <source>
        <dbReference type="PDB" id="2C0B"/>
    </source>
</evidence>
<evidence type="ECO:0007829" key="34">
    <source>
        <dbReference type="PDB" id="2FYM"/>
    </source>
</evidence>
<evidence type="ECO:0007829" key="35">
    <source>
        <dbReference type="PDB" id="2VMK"/>
    </source>
</evidence>
<evidence type="ECO:0007829" key="36">
    <source>
        <dbReference type="PDB" id="2VRT"/>
    </source>
</evidence>
<evidence type="ECO:0007829" key="37">
    <source>
        <dbReference type="PDB" id="3H8A"/>
    </source>
</evidence>
<evidence type="ECO:0007829" key="38">
    <source>
        <dbReference type="PDB" id="5F6C"/>
    </source>
</evidence>
<organism>
    <name type="scientific">Escherichia coli (strain K12)</name>
    <dbReference type="NCBI Taxonomy" id="83333"/>
    <lineage>
        <taxon>Bacteria</taxon>
        <taxon>Pseudomonadati</taxon>
        <taxon>Pseudomonadota</taxon>
        <taxon>Gammaproteobacteria</taxon>
        <taxon>Enterobacterales</taxon>
        <taxon>Enterobacteriaceae</taxon>
        <taxon>Escherichia</taxon>
    </lineage>
</organism>
<name>RNE_ECOLI</name>
<comment type="function">
    <text evidence="1 3 4 6 7 12 14 15 19 23 24 25 26">Endoribonuclease that plays a central role in RNA processing and decay. Required for the maturation of 5S and 16S rRNAs and the majority of tRNAs. Also involved in the degradation of most mRNAs. Can also process other RNA species, such as RNAI, a molecule that controls the replication of ColE1 plasmid, and the cell division inhibitor DicF-RNA. It initiates the decay of RNAs by cutting them internally near their 5'-end. It is able to remove poly(A) tails by an endonucleolytic process. Required to initiate rRNA degradation during both starvation and quality control; acts after RNase PH (rph) exonucleolytically digests the 3'-end of the 16S rRNA (PubMed:27298395). Degradation of 16S rRNA leads to 23S rRNA degradation (PubMed:27298395). Processes the 3 tRNA(Pro) precursors immediately after the 3'-CCA to generate the mature ends (PubMed:27288443).</text>
</comment>
<comment type="function">
    <text evidence="4 22">Prefers 5'-monophosphorylated substrates over 5'-triphosphorylated substrates (PubMed:10762247). 5'-monophosphate-assisted cleavage requires at least 2 and preferably 3 or more unpaired 5'-terminal nucleotides. The optimal spacing between the 5' end and the scissile phosphate appears to be 8 nucleotides. Any sequence of unpaired nucleotides at the 5'-end is tolerated (PubMed:26694614).</text>
</comment>
<comment type="catalytic activity">
    <reaction evidence="1 11 12 19">
        <text>Endonucleolytic cleavage of single-stranded RNA in A- and U-rich regions.</text>
        <dbReference type="EC" id="3.1.26.12"/>
    </reaction>
</comment>
<comment type="cofactor">
    <cofactor evidence="11 12 17">
        <name>Zn(2+)</name>
        <dbReference type="ChEBI" id="CHEBI:29105"/>
    </cofactor>
    <text evidence="11">Binds 2 Zn(2+) ions per homotetramer. Zinc ions are bound between subunits and are essential for homotetramerization and catalytic activity, but not for RNA binding. In the absence of zinc, the protein dissociates into inactive dimers.</text>
</comment>
<comment type="cofactor">
    <cofactor evidence="12">
        <name>Mg(2+)</name>
        <dbReference type="ChEBI" id="CHEBI:18420"/>
    </cofactor>
    <text evidence="12">Binds 1 Mg(2+) ion per subunit.</text>
</comment>
<comment type="activity regulation">
    <text evidence="8 21">The presence of a 5'-monophosphate on substrate RNA accelerates its cleavage by catalytically activating the enzyme (PubMed:15197283). Binding to the membrane stabilizes protein structure and increases affinity for the substrate.</text>
</comment>
<comment type="biophysicochemical properties">
    <kinetics>
        <KM evidence="8">0.6 uM for 5'-phosphorylated fluorogenic substrate</KM>
        <KM evidence="8">0.57 uM for 5'-OH fluorogenic substrate</KM>
        <text evidence="8">kcat is 0.83 min(-1) for 5'-PO(4) substrate and 0.088 min(-1) for 5-OH substrate.</text>
    </kinetics>
</comment>
<comment type="subunit">
    <text evidence="1 5 9 10 11 12 13 16 17 18 20 26">Component of the RNA degradosome, which is a multiprotein complex involved in RNA processing and mRNA degradation. Within the RNA degradosome, RNase E assembles into a homotetramer formed by a dimer of dimers. Tetramerization is essential for catalytic activity, but not for RNA-binding. Interacts with RhlB, PNPase (pnp) and enolase (eno). Interacts with DeaD at reduced temperature.</text>
</comment>
<comment type="interaction">
    <interactant intactId="EBI-549958">
        <id>P21513</id>
    </interactant>
    <interactant intactId="EBI-542092">
        <id>P0A6Y8</id>
        <label>dnaK</label>
    </interactant>
    <organismsDiffer>false</organismsDiffer>
    <experiments>10</experiments>
</comment>
<comment type="interaction">
    <interactant intactId="EBI-549958">
        <id>P21513</id>
    </interactant>
    <interactant intactId="EBI-368855">
        <id>P0A6P9</id>
        <label>eno</label>
    </interactant>
    <organismsDiffer>false</organismsDiffer>
    <experiments>17</experiments>
</comment>
<comment type="interaction">
    <interactant intactId="EBI-549958">
        <id>P21513</id>
    </interactant>
    <interactant intactId="EBI-548080">
        <id>P05055</id>
        <label>pnp</label>
    </interactant>
    <organismsDiffer>false</organismsDiffer>
    <experiments>13</experiments>
</comment>
<comment type="interaction">
    <interactant intactId="EBI-549958">
        <id>P21513</id>
    </interactant>
    <interactant intactId="EBI-555806">
        <id>P0A8J8</id>
        <label>rhlB</label>
    </interactant>
    <organismsDiffer>false</organismsDiffer>
    <experiments>18</experiments>
</comment>
<comment type="interaction">
    <interactant intactId="EBI-549958">
        <id>P21513</id>
    </interactant>
    <interactant intactId="EBI-549958">
        <id>P21513</id>
        <label>rne</label>
    </interactant>
    <organismsDiffer>false</organismsDiffer>
    <experiments>2</experiments>
</comment>
<comment type="interaction">
    <interactant intactId="EBI-549958">
        <id>P21513</id>
    </interactant>
    <interactant intactId="EBI-546628">
        <id>P21507</id>
        <label>srmB</label>
    </interactant>
    <organismsDiffer>false</organismsDiffer>
    <experiments>3</experiments>
</comment>
<comment type="subcellular location">
    <subcellularLocation>
        <location evidence="5">Cytoplasm</location>
    </subcellularLocation>
    <subcellularLocation>
        <location evidence="5 21">Cell inner membrane</location>
        <topology evidence="5 21">Peripheral membrane protein</topology>
        <orientation evidence="5 21">Cytoplasmic side</orientation>
    </subcellularLocation>
    <text evidence="5 21">Associated with the cytoplasmic membrane via the N- and C-terminal regions.</text>
</comment>
<comment type="domain">
    <text evidence="9 26">The N-terminal S1 motif binds RNA, and can also bind single-stranded DNA (in vitro). The C-terminal region interacts with the other degradosomal components.</text>
</comment>
<comment type="disruption phenotype">
    <text evidence="3">Essential, it cannot be deleted. In a temperature sensitive mutant at non-permissive temperature, slow processing of the 17S rRNA precursor to 16S rRNA; a double rne-rng mutated strain no longer processes the 17S rRNA precursor.</text>
</comment>
<comment type="miscellaneous">
    <text evidence="24">In K12 strains that are derived from W1485 (including MG1655 and W3110) the rph gene has a frameshift that leads to loss of its ribonuclease PH activity. In strain K12 / MG1655(Seq)* the wild-type Rph protein has been restored (PubMed:27298395).</text>
</comment>
<comment type="similarity">
    <text evidence="1">Belongs to the RNase E/G family. RNase E subfamily.</text>
</comment>
<comment type="sequence caution" evidence="29">
    <conflict type="frameshift">
        <sequence resource="EMBL-CDS" id="AAA23443"/>
    </conflict>
</comment>
<comment type="sequence caution" evidence="29">
    <conflict type="frameshift">
        <sequence resource="EMBL-CDS" id="CAA38206"/>
    </conflict>
</comment>
<comment type="sequence caution" evidence="29">
    <conflict type="frameshift">
        <sequence resource="EMBL-CDS" id="CAA47818"/>
    </conflict>
</comment>
<sequence length="1061" mass="118197">MKRMLINATQQEELRVALVDGQRLYDLDIESPGHEQKKANIYKGKITRIEPSLEAAFVDYGAERHGFLPLKEIAREYFPANYSAHGRPNIKDVLREGQEVIVQIDKEERGNKGAALTTFISLAGSYLVLMPNNPRAGGISRRIEGDDRTELKEALASLELPEGMGLIVRTAGVGKSAEALQWDLSFRLKHWEAIKKAAESRPAPFLIHQESNVIVRAFRDYLRQDIGEILIDNPKVLELARQHIAALGRPDFSSKIKLYTGEIPLFSHYQIESQIESAFQREVRLPSGGSIVIDSTEALTAIDINSARATRGGDIEETAFNTNLEAADEIARQLRLRDLGGLIVIDFIDMTPVRHQRAVENRLREAVRQDRARIQISHISRFGLLEMSRQRLSPSLGESSHHVCPRCSGTGTVRDNESLSLSILRLIEEEALKENTQEVHAIVPVPIASYLLNEKRSAVNAIETRQDGVRCVIVPNDQMETPHYHVLRVRKGEETPTLSYMLPKLHEEAMALPSEEEFAERKRPEQPALATFAMPDVPPAPTPAEPAAPVVAPAPKAAPATPAAPAQPGLLSRFFGALKALFSGGEETKPTEQPAPKAEAKPERQQDRRKPRQNNRRDRNERRDTRSERTEGSDNREENRRNRRQAQQQTAETRESRQQAEVTEKARTADEQQAPRRERSRRRNDDKRQAQQEAKALNVEEQSVQETEQEERVRPVQPRRKQRQLNQKVRYEQSVAEEAVVAPVVEETVAAEPIVQEAPAPRTELVKVPLPVVAQTAPEQQEENNADNRDNGGMPRRSRRSPRHLRVSGQRRRRYRDERYPTQSPMPLTVACASPELASGKVWIRYPIVRPQDVQVEEQREQEEVHVQPMVTEVPVAAAIEPVVSAPVVEEVAGVVEAPVQVAEPQPEVVETTHPEVIAAAVTEQPQVITESDVAVAQEVAEQAEPVVEPQEETADIEEVVETAEVVVAEPEVVAQPAAPVVAEVAAEVETVAAVEPEVTVEHNHATAPMTRAPAPEYVPEAPRHSDWQRPTFAFEGKGAAGGHTATHHASAAPARPQPVE</sequence>
<reference key="1">
    <citation type="journal article" date="1996" name="DNA Res.">
        <title>A 718-kb DNA sequence of the Escherichia coli K-12 genome corresponding to the 12.7-28.0 min region on the linkage map.</title>
        <authorList>
            <person name="Oshima T."/>
            <person name="Aiba H."/>
            <person name="Baba T."/>
            <person name="Fujita K."/>
            <person name="Hayashi K."/>
            <person name="Honjo A."/>
            <person name="Ikemoto K."/>
            <person name="Inada T."/>
            <person name="Itoh T."/>
            <person name="Kajihara M."/>
            <person name="Kanai K."/>
            <person name="Kashimoto K."/>
            <person name="Kimura S."/>
            <person name="Kitagawa M."/>
            <person name="Makino K."/>
            <person name="Masuda S."/>
            <person name="Miki T."/>
            <person name="Mizobuchi K."/>
            <person name="Mori H."/>
            <person name="Motomura K."/>
            <person name="Nakamura Y."/>
            <person name="Nashimoto H."/>
            <person name="Nishio Y."/>
            <person name="Saito N."/>
            <person name="Sampei G."/>
            <person name="Seki Y."/>
            <person name="Tagami H."/>
            <person name="Takemoto K."/>
            <person name="Wada C."/>
            <person name="Yamamoto Y."/>
            <person name="Yano M."/>
            <person name="Horiuchi T."/>
        </authorList>
    </citation>
    <scope>NUCLEOTIDE SEQUENCE [LARGE SCALE GENOMIC DNA]</scope>
    <source>
        <strain>K12 / W3110 / ATCC 27325 / DSM 5911</strain>
    </source>
</reference>
<reference key="2">
    <citation type="journal article" date="1997" name="Science">
        <title>The complete genome sequence of Escherichia coli K-12.</title>
        <authorList>
            <person name="Blattner F.R."/>
            <person name="Plunkett G. III"/>
            <person name="Bloch C.A."/>
            <person name="Perna N.T."/>
            <person name="Burland V."/>
            <person name="Riley M."/>
            <person name="Collado-Vides J."/>
            <person name="Glasner J.D."/>
            <person name="Rode C.K."/>
            <person name="Mayhew G.F."/>
            <person name="Gregor J."/>
            <person name="Davis N.W."/>
            <person name="Kirkpatrick H.A."/>
            <person name="Goeden M.A."/>
            <person name="Rose D.J."/>
            <person name="Mau B."/>
            <person name="Shao Y."/>
        </authorList>
    </citation>
    <scope>NUCLEOTIDE SEQUENCE [LARGE SCALE GENOMIC DNA]</scope>
    <source>
        <strain>K12 / MG1655 / ATCC 47076</strain>
    </source>
</reference>
<reference key="3">
    <citation type="journal article" date="2006" name="Mol. Syst. Biol.">
        <title>Highly accurate genome sequences of Escherichia coli K-12 strains MG1655 and W3110.</title>
        <authorList>
            <person name="Hayashi K."/>
            <person name="Morooka N."/>
            <person name="Yamamoto Y."/>
            <person name="Fujita K."/>
            <person name="Isono K."/>
            <person name="Choi S."/>
            <person name="Ohtsubo E."/>
            <person name="Baba T."/>
            <person name="Wanner B.L."/>
            <person name="Mori H."/>
            <person name="Horiuchi T."/>
        </authorList>
    </citation>
    <scope>NUCLEOTIDE SEQUENCE [LARGE SCALE GENOMIC DNA]</scope>
    <source>
        <strain>K12 / W3110 / ATCC 27325 / DSM 5911</strain>
    </source>
</reference>
<reference key="4">
    <citation type="journal article" date="1992" name="J. Mol. Biol.">
        <title>Cloning and analysis of the entire Escherichia coli ams gene. ams is identical to hmp1 and encodes a 114 kDa protein that migrates as a 180 kDa protein.</title>
        <authorList>
            <person name="Casaregola S."/>
            <person name="Jacq A."/>
            <person name="Laoudj D."/>
            <person name="McGurk G."/>
            <person name="Margarson S."/>
            <person name="Tempete M."/>
            <person name="Norris V."/>
            <person name="Holland I.B."/>
        </authorList>
    </citation>
    <scope>NUCLEOTIDE SEQUENCE [GENOMIC DNA] OF 1-1025</scope>
    <source>
        <strain>K12</strain>
    </source>
</reference>
<reference key="5">
    <citation type="journal article" date="1991" name="J. Biol. Chem.">
        <title>Analysis of the altered mRNA stability (ams) gene from Escherichia coli. Nucleotide sequence, transcriptional analysis, and homology of its product to MRP3, a mitochondrial ribosomal protein from Neurospora crassa.</title>
        <authorList>
            <person name="Claverie-Martin F."/>
            <person name="Diaz-Torres M."/>
            <person name="Yancey S.D."/>
            <person name="Kushner S.R."/>
        </authorList>
    </citation>
    <scope>NUCLEOTIDE SEQUENCE [GENOMIC DNA] OF 1-844</scope>
    <source>
        <strain>K12</strain>
    </source>
</reference>
<reference key="6">
    <citation type="journal article" date="1991" name="Nucleic Acids Res.">
        <title>Sequencing and expression of the rne gene of Escherichia coli.</title>
        <authorList>
            <person name="Chauhan A.K."/>
            <person name="Miczak A."/>
            <person name="Taraseviciene L."/>
            <person name="Apirion D."/>
        </authorList>
    </citation>
    <scope>PARTIAL NUCLEOTIDE SEQUENCE [GENOMIC DNA]</scope>
    <scope>PROTEIN SEQUENCE OF 1-27</scope>
    <source>
        <strain>K12</strain>
    </source>
</reference>
<reference key="7">
    <citation type="journal article" date="1993" name="Proc. Natl. Acad. Sci. U.S.A.">
        <title>RNase E activity is conferred by a single polypeptide: overexpression, purification, and properties of the ams/rne/hmp1 gene product.</title>
        <authorList>
            <person name="Cormack R.S."/>
            <person name="Genereaux J.L."/>
            <person name="Mackie G.A."/>
        </authorList>
    </citation>
    <scope>NUCLEOTIDE SEQUENCE [GENOMIC DNA] OF 844-1061</scope>
    <scope>CHARACTERIZATION</scope>
    <source>
        <strain>K12</strain>
    </source>
</reference>
<reference key="8">
    <citation type="journal article" date="1983" name="Eur. J. Biochem.">
        <title>Maturation of 5-S rRNA: ribonuclease E cleavages and their dependence on precursor sequences.</title>
        <authorList>
            <person name="Roy M.K."/>
            <person name="Singh B."/>
            <person name="Ray B.K."/>
            <person name="Apirion D."/>
        </authorList>
    </citation>
    <scope>FUNCTION IN 5S RRNA MATURATION</scope>
</reference>
<reference key="9">
    <citation type="journal article" date="1990" name="J. Mol. Biol.">
        <title>Escherichia coli cell division inhibitor DicF-RNA of the dicB operon. Evidence for its generation in vivo by transcription termination and by RNase III and RNase E-dependent processing.</title>
        <authorList>
            <person name="Faubladier M."/>
            <person name="Cam K."/>
            <person name="Bouche J.P."/>
        </authorList>
    </citation>
    <scope>FUNCTION IN PROCESSING OF DICF-RNA</scope>
</reference>
<reference key="10">
    <citation type="journal article" date="1990" name="Mol. Microbiol.">
        <title>RNase E, an endoribonuclease, has a general role in the chemical decay of Escherichia coli mRNA: evidence that rne and ams are the same genetic locus.</title>
        <authorList>
            <person name="Mudd E.A."/>
            <person name="Krisch H.M."/>
            <person name="Higgins C.F."/>
        </authorList>
    </citation>
    <scope>FUNCTION</scope>
</reference>
<reference key="11">
    <citation type="journal article" date="1998" name="Genes Dev.">
        <title>Ribonuclease E organizes the protein interactions in the Escherichia coli RNA degradosome.</title>
        <authorList>
            <person name="Vanzo N.F."/>
            <person name="Li Y.S."/>
            <person name="Py B."/>
            <person name="Blum E."/>
            <person name="Higgins C.F."/>
            <person name="Raynal L.C."/>
            <person name="Krisch H.M."/>
            <person name="Carpousis A.J."/>
        </authorList>
    </citation>
    <scope>FUNCTION</scope>
    <scope>INTERACTION WITH RHLB; PNPASE AND ENOLASE</scope>
    <scope>DOMAIN</scope>
</reference>
<reference key="12">
    <citation type="journal article" date="1999" name="EMBO J.">
        <title>RNase G (CafA protein) and RNase E are both required for the 5' maturation of 16S ribosomal RNA.</title>
        <authorList>
            <person name="Li Z."/>
            <person name="Pandit S."/>
            <person name="Deutscher M.P."/>
        </authorList>
    </citation>
    <scope>FUNCTION IN 16S RRNA MATURATION</scope>
    <scope>DISRUPTION PHENOTYPE</scope>
    <source>
        <strain>K12</strain>
    </source>
</reference>
<reference key="13">
    <citation type="journal article" date="2000" name="J. Bacteriol.">
        <title>Regions of RNase E important for 5'-end-dependent RNA cleavage and autoregulated synthesis.</title>
        <authorList>
            <person name="Jiang X."/>
            <person name="Diwa A."/>
            <person name="Belasco J.G."/>
        </authorList>
    </citation>
    <scope>FUNCTION AS AN ENDONUCLEASE</scope>
    <scope>SUBSTRATE SPECIFICITY</scope>
</reference>
<reference key="14">
    <citation type="journal article" date="2001" name="Proc. Natl. Acad. Sci. U.S.A.">
        <title>RNA degradosomes exist in vivo in Escherichia coli as multicomponent complexes associated with the cytoplasmic membrane via the N-terminal region of ribonuclease E.</title>
        <authorList>
            <person name="Liou G.G."/>
            <person name="Jane W.N."/>
            <person name="Cohen S.N."/>
            <person name="Lin N.S."/>
            <person name="Lin-Chao S."/>
        </authorList>
    </citation>
    <scope>SUBUNIT</scope>
    <scope>SUBCELLULAR LOCATION</scope>
</reference>
<reference key="15">
    <citation type="journal article" date="2001" name="Nucleic Acids Res.">
        <title>Cleavage of poly(A) tails on the 3'-end of RNA by ribonuclease E of Escherichia coli.</title>
        <authorList>
            <person name="Walsh A.P."/>
            <person name="Tock M.R."/>
            <person name="Mallen M.H."/>
            <person name="Kaberdin V.R."/>
            <person name="Gabain Av A."/>
            <person name="McDowall K.J."/>
        </authorList>
    </citation>
    <scope>FUNCTION IN CLEAVAGE OF POLY(A)</scope>
</reference>
<reference key="16">
    <citation type="journal article" date="2002" name="RNA">
        <title>RNase E plays an essential role in the maturation of Escherichia coli tRNA precursors.</title>
        <authorList>
            <person name="Li Z."/>
            <person name="Deutscher M.P."/>
        </authorList>
    </citation>
    <scope>FUNCTION IN TRNA MATURATION</scope>
    <source>
        <strain>K12</strain>
    </source>
</reference>
<reference key="17">
    <citation type="journal article" date="2004" name="Mol. Microbiol.">
        <title>Physical and functional interactions among RNase E, polynucleotide phosphorylase and the cold-shock protein, CsdA: evidence for a 'cold shock degradosome'.</title>
        <authorList>
            <person name="Prud'homme-Genereux A."/>
            <person name="Beran R.K."/>
            <person name="Iost I."/>
            <person name="Ramey C.S."/>
            <person name="Mackie G.A."/>
            <person name="Simons R.W."/>
        </authorList>
    </citation>
    <scope>INTERACTION WITH DEAD</scope>
    <source>
        <strain>CF881</strain>
    </source>
</reference>
<reference key="18">
    <citation type="journal article" date="2004" name="Proc. Natl. Acad. Sci. U.S.A.">
        <title>Catalytic activation of multimeric RNase E and RNase G by 5'-monophosphorylated RNA.</title>
        <authorList>
            <person name="Jiang X."/>
            <person name="Belasco J.G."/>
        </authorList>
    </citation>
    <scope>ACTIVITY REGULATION</scope>
    <scope>BIOPHYSICOCHEMICAL PROPERTIES</scope>
</reference>
<reference key="19">
    <citation type="journal article" date="2005" name="Biochemistry">
        <title>'Zn-link': a metal-sharing interface that organizes the quaternary structure and catalytic site of the endoribonuclease, RNase E.</title>
        <authorList>
            <person name="Callaghan A.J."/>
            <person name="Redko Y."/>
            <person name="Murphy L.M."/>
            <person name="Grossmann J.G."/>
            <person name="Yates D."/>
            <person name="Garman E."/>
            <person name="Ilag L.L."/>
            <person name="Robinson C.V."/>
            <person name="Symmons M.F."/>
            <person name="McDowall K.J."/>
            <person name="Luisi B.F."/>
        </authorList>
    </citation>
    <scope>CATALYTIC ACTIVITY</scope>
    <scope>RNA-BINDING</scope>
    <scope>SUBUNIT</scope>
    <scope>ZINC-BINDING</scope>
    <scope>COFACTOR</scope>
    <scope>IDENTIFICATION BY MASS SPECTROMETRY</scope>
    <scope>MUTAGENESIS OF CYS-404 AND CYS-407</scope>
</reference>
<reference key="20">
    <citation type="journal article" date="2008" name="J. Biol. Chem.">
        <title>RNaseE and RNA helicase B play central roles in the cytoskeletal organization of the RNA degradosome.</title>
        <authorList>
            <person name="Taghbalout A."/>
            <person name="Rothfield L."/>
        </authorList>
    </citation>
    <scope>INTERACTION WITH RHLB; PNPASE AND ENOLASE</scope>
</reference>
<reference key="21">
    <citation type="journal article" date="2010" name="Mol. Microbiol.">
        <title>Rapid cleavage of RNA by RNase E in the absence of 5' monophosphate stimulation.</title>
        <authorList>
            <person name="Kime L."/>
            <person name="Jourdan S.S."/>
            <person name="Stead J.A."/>
            <person name="Hidalgo-Sastre A."/>
            <person name="McDowall K.J."/>
        </authorList>
    </citation>
    <scope>CATALYTIC ACTIVITY</scope>
    <scope>FUNCTION</scope>
    <scope>MUTAGENESIS OF THR-170</scope>
</reference>
<reference key="22">
    <citation type="journal article" date="2012" name="Proc. Natl. Acad. Sci. U.S.A.">
        <title>Membrane binding of Escherichia coli RNase E catalytic domain stabilizes protein structure and increases RNA substrate affinity.</title>
        <authorList>
            <person name="Murashko O.N."/>
            <person name="Kaberdin V.R."/>
            <person name="Lin-Chao S."/>
        </authorList>
    </citation>
    <scope>ACTIVITY REGULATION</scope>
    <scope>SUBCELLULAR LOCATION</scope>
</reference>
<reference key="23">
    <citation type="journal article" date="2016" name="J. Biol. Chem.">
        <title>Distinct Requirements for 5'-Monophosphate-assisted RNA Cleavage by Escherichia coli RNase E and RNase G.</title>
        <authorList>
            <person name="Richards J."/>
            <person name="Belasco J.G."/>
        </authorList>
    </citation>
    <scope>SUBSTRATE SPECIFICITY</scope>
</reference>
<reference key="24">
    <citation type="journal article" date="2016" name="J. Biol. Chem.">
        <title>Distinct requirements for 5'-monophosphate-assisted RNA cleavage by Escherichia coli RNase E and RNase G.</title>
        <authorList>
            <person name="Richards J."/>
            <person name="Belasco J.G."/>
        </authorList>
    </citation>
    <scope>ERRATUM OF PUBMED:26694614</scope>
</reference>
<reference key="25">
    <citation type="journal article" date="2016" name="Nucleic Acids Res.">
        <title>Endonucleolytic cleavages by RNase E generate the mature 3' termini of the three proline tRNAs in Escherichia coli.</title>
        <authorList>
            <person name="Mohanty B.K."/>
            <person name="Petree J.R."/>
            <person name="Kushner S.R."/>
        </authorList>
    </citation>
    <scope>FUNCTION IN TRNA(PRO) 3' PROCESSING</scope>
    <source>
        <strain>K12 / MG1655 / ATCC 47076</strain>
    </source>
</reference>
<reference key="26">
    <citation type="journal article" date="2016" name="RNA">
        <title>Elucidation of pathways of ribosomal RNA degradation: an essential role for RNase E.</title>
        <authorList>
            <person name="Sulthana S."/>
            <person name="Basturea G.N."/>
            <person name="Deutscher M.P."/>
        </authorList>
    </citation>
    <scope>FUNCTION IN RRNA DEGRADATION</scope>
    <source>
        <strain>K12 / MG1655(Seq)*</strain>
    </source>
</reference>
<reference key="27">
    <citation type="journal article" date="2004" name="J. Mol. Biol.">
        <title>Structural characterization of the RNase E S1 domain and identification of its oligonucleotide-binding and dimerization interfaces.</title>
        <authorList>
            <person name="Schubert M."/>
            <person name="Edge R.E."/>
            <person name="Lario P."/>
            <person name="Cook M.A."/>
            <person name="Strynadka N.C."/>
            <person name="Mackie G.A."/>
            <person name="McIntosh L.P."/>
        </authorList>
    </citation>
    <scope>X-RAY CRYSTALLOGRAPHY (1.80 ANGSTROMS) OF 35-125</scope>
    <scope>STRUCTURE BY NMR OF 35-125</scope>
    <scope>SUBUNIT</scope>
    <scope>RNA-BINDING</scope>
    <scope>DOMAIN</scope>
    <scope>MUTAGENESIS OF GLY-66</scope>
</reference>
<reference key="28">
    <citation type="journal article" date="2005" name="Nature">
        <title>Structure of Escherichia coli RNase E catalytic domain and implications for RNA turnover.</title>
        <authorList>
            <person name="Callaghan A.J."/>
            <person name="Marcaida M.J."/>
            <person name="Stead J.A."/>
            <person name="McDowall K.J."/>
            <person name="Scott W.G."/>
            <person name="Luisi B.F."/>
        </authorList>
    </citation>
    <scope>X-RAY CRYSTALLOGRAPHY (2.85 ANGSTROMS) OF 1-510 IN COMPLEXES WITH RNA; ZINC AND MAGNESIUM IONS</scope>
    <scope>FUNCTION</scope>
    <scope>CATALYTIC ACTIVITY</scope>
    <scope>COFACTOR</scope>
    <scope>SUBUNIT</scope>
    <scope>MUTAGENESIS OF PHE-57; PHE-67; LYS-112; THR-170; ASP-303; ASN-305; ASP-346 AND ARG-373</scope>
</reference>
<reference key="29">
    <citation type="journal article" date="2006" name="J. Mol. Biol.">
        <title>Recognition of enolase in the Escherichia coli RNA degradosome.</title>
        <authorList>
            <person name="Chandran V."/>
            <person name="Luisi B.F."/>
        </authorList>
    </citation>
    <scope>X-RAY CRYSTALLOGRAPHY (1.60 ANGSTROMS) OF 833-850 IN COMPLEX WITH ENO</scope>
    <scope>SUBUNIT</scope>
</reference>
<reference key="30">
    <citation type="journal article" date="2008" name="Structure">
        <title>The crystal structure of the Escherichia coli RNase E apoprotein and a mechanism for RNA degradation.</title>
        <authorList>
            <person name="Koslover D.J."/>
            <person name="Callaghan A.J."/>
            <person name="Marcaida M.J."/>
            <person name="Garman E.F."/>
            <person name="Martick M."/>
            <person name="Scott W.G."/>
            <person name="Luisi B.F."/>
        </authorList>
    </citation>
    <scope>X-RAY CRYSTALLOGRAPHY (3.30 ANGSTROMS) OF 1-515 IN COMPLEX WITH RNA AND ZINC IONS</scope>
    <scope>SUBUNIT</scope>
</reference>
<reference key="31">
    <citation type="journal article" date="2009" name="J. Mol. Biol.">
        <title>Crystal structure of Escherichia coli polynucleotide phosphorylase core bound to RNase E, RNA and manganese: implications for catalytic mechanism and RNA degradosome assembly.</title>
        <authorList>
            <person name="Nurmohamed S."/>
            <person name="Vaidialingam B."/>
            <person name="Callaghan A.J."/>
            <person name="Luisi B.F."/>
        </authorList>
    </citation>
    <scope>X-RAY CRYSTALLOGRAPHY (2.4 ANGSTROMS) OF 1021-1061 IN COMPLEXES WITH PNP AND RNA</scope>
    <scope>SUBUNIT</scope>
</reference>
<reference key="32">
    <citation type="journal article" date="2010" name="Acta Crystallogr. D">
        <title>Molecular recognition between Escherichia coli enolase and ribonuclease E.</title>
        <authorList>
            <person name="Nurmohamed S."/>
            <person name="McKay A.R."/>
            <person name="Robinson C.V."/>
            <person name="Luisi B.F."/>
        </authorList>
    </citation>
    <scope>X-RAY CRYSTALLOGRAPHY (1.90 ANGSTROMS) OF 823-850 IN COMPLEX WITH ENO</scope>
    <scope>INTERACTION WITH ENO</scope>
    <scope>IDENTIFICATION BY MASS SPECTROMETRY</scope>
    <scope>SUBUNIT</scope>
</reference>
<accession>P21513</accession>
<accession>P77591</accession>
<feature type="chain" id="PRO_0000097373" description="Ribonuclease E">
    <location>
        <begin position="1"/>
        <end position="1061"/>
    </location>
</feature>
<feature type="domain" description="S1 motif" evidence="1">
    <location>
        <begin position="39"/>
        <end position="119"/>
    </location>
</feature>
<feature type="region of interest" description="Interaction with RNA">
    <location>
        <begin position="57"/>
        <end position="112"/>
    </location>
</feature>
<feature type="region of interest" description="Interaction with RNA 5'-terminal monophosphate">
    <location>
        <begin position="169"/>
        <end position="170"/>
    </location>
</feature>
<feature type="region of interest" description="Required for zinc-mediated homotetramerization and catalytic activity">
    <location>
        <begin position="404"/>
        <end position="407"/>
    </location>
</feature>
<feature type="region of interest" description="Disordered" evidence="2">
    <location>
        <begin position="532"/>
        <end position="565"/>
    </location>
</feature>
<feature type="region of interest" description="Disordered" evidence="2">
    <location>
        <begin position="586"/>
        <end position="731"/>
    </location>
</feature>
<feature type="region of interest" description="Disordered" evidence="2">
    <location>
        <begin position="752"/>
        <end position="822"/>
    </location>
</feature>
<feature type="region of interest" description="Interaction with enolase">
    <location>
        <begin position="833"/>
        <end position="850"/>
    </location>
</feature>
<feature type="region of interest" description="Interaction with PNPase">
    <location>
        <begin position="1021"/>
        <end position="1061"/>
    </location>
</feature>
<feature type="region of interest" description="Disordered" evidence="2">
    <location>
        <begin position="1031"/>
        <end position="1061"/>
    </location>
</feature>
<feature type="compositionally biased region" description="Pro residues" evidence="2">
    <location>
        <begin position="536"/>
        <end position="546"/>
    </location>
</feature>
<feature type="compositionally biased region" description="Low complexity" evidence="2">
    <location>
        <begin position="547"/>
        <end position="565"/>
    </location>
</feature>
<feature type="compositionally biased region" description="Basic and acidic residues" evidence="2">
    <location>
        <begin position="598"/>
        <end position="608"/>
    </location>
</feature>
<feature type="compositionally biased region" description="Basic and acidic residues" evidence="2">
    <location>
        <begin position="615"/>
        <end position="640"/>
    </location>
</feature>
<feature type="compositionally biased region" description="Basic and acidic residues" evidence="2">
    <location>
        <begin position="652"/>
        <end position="690"/>
    </location>
</feature>
<feature type="compositionally biased region" description="Basic residues" evidence="2">
    <location>
        <begin position="796"/>
        <end position="814"/>
    </location>
</feature>
<feature type="compositionally biased region" description="Low complexity" evidence="2">
    <location>
        <begin position="1043"/>
        <end position="1055"/>
    </location>
</feature>
<feature type="binding site" evidence="12">
    <location>
        <position position="303"/>
    </location>
    <ligand>
        <name>Mg(2+)</name>
        <dbReference type="ChEBI" id="CHEBI:18420"/>
        <note>catalytic</note>
    </ligand>
</feature>
<feature type="binding site" evidence="12">
    <location>
        <position position="346"/>
    </location>
    <ligand>
        <name>Mg(2+)</name>
        <dbReference type="ChEBI" id="CHEBI:18420"/>
        <note>catalytic</note>
    </ligand>
</feature>
<feature type="binding site" evidence="11 17">
    <location>
        <position position="404"/>
    </location>
    <ligand>
        <name>Zn(2+)</name>
        <dbReference type="ChEBI" id="CHEBI:29105"/>
        <note>ligand shared between dimeric partners</note>
    </ligand>
</feature>
<feature type="binding site" evidence="11 17">
    <location>
        <position position="407"/>
    </location>
    <ligand>
        <name>Zn(2+)</name>
        <dbReference type="ChEBI" id="CHEBI:29105"/>
        <note>ligand shared between dimeric partners</note>
    </ligand>
</feature>
<feature type="mutagenesis site" description="Reduces RNA cleavage by over 98%." evidence="12">
    <original>F</original>
    <variation>A</variation>
    <location>
        <position position="57"/>
    </location>
</feature>
<feature type="mutagenesis site" description="Disrupts folding of the S1 motif." evidence="9">
    <original>G</original>
    <variation>S</variation>
    <location>
        <position position="66"/>
    </location>
</feature>
<feature type="mutagenesis site" description="Reduces RNA cleavage by over 98%." evidence="12">
    <original>F</original>
    <variation>A</variation>
    <location>
        <position position="67"/>
    </location>
</feature>
<feature type="mutagenesis site" description="Reduces RNA cleavage by 98%." evidence="12">
    <original>K</original>
    <variation>A</variation>
    <location>
        <position position="112"/>
    </location>
</feature>
<feature type="mutagenesis site" description="Abolishes enzyme activity toward RNA substrates with a 5' monophosphate (PubMed:16237448). Strongly reduces enzyme activity toward cspA mRNA (PubMed:19889093)." evidence="12 19">
    <original>T</original>
    <variation>V</variation>
    <location>
        <position position="170"/>
    </location>
</feature>
<feature type="mutagenesis site" description="Reduces RNA cleavage by over 96%." evidence="12">
    <original>D</original>
    <variation>N</variation>
    <location>
        <position position="303"/>
    </location>
</feature>
<feature type="mutagenesis site" description="Reduces RNA cleavage by over 96%." evidence="12">
    <original>N</original>
    <variation>D</variation>
    <variation>L</variation>
    <location>
        <position position="305"/>
    </location>
</feature>
<feature type="mutagenesis site" description="Reduces RNA cleavage by over 96%." evidence="12">
    <original>D</original>
    <variation>N</variation>
    <location>
        <position position="346"/>
    </location>
</feature>
<feature type="mutagenesis site" description="Reduces RNA cleavage by 89%." evidence="12">
    <original>R</original>
    <variation>A</variation>
    <variation>D</variation>
    <location>
        <position position="373"/>
    </location>
</feature>
<feature type="mutagenesis site" description="Reduces zinc-binding. Abolishes homotetramerization and enzyme activity." evidence="11">
    <original>C</original>
    <variation>A</variation>
    <location>
        <position position="404"/>
    </location>
</feature>
<feature type="mutagenesis site" description="Reduces zinc-binding. Abolishes homotetramerization and enzyme activity." evidence="11">
    <original>C</original>
    <variation>A</variation>
    <location>
        <position position="407"/>
    </location>
</feature>
<feature type="sequence conflict" description="In Ref. 5; AAA23443." evidence="29" ref="5">
    <original>Q</original>
    <variation>H</variation>
    <location>
        <position position="390"/>
    </location>
</feature>
<feature type="sequence conflict" description="In Ref. 4; CAA47818 and 5; AAA23443." evidence="29" ref="4 5">
    <original>L</original>
    <variation>V</variation>
    <location>
        <position position="487"/>
    </location>
</feature>
<feature type="sequence conflict" description="In Ref. 4; CAA47818." evidence="29" ref="4">
    <original>A</original>
    <variation>R</variation>
    <location>
        <position position="564"/>
    </location>
</feature>
<feature type="sequence conflict" description="In Ref. 4; CAA47818." evidence="29" ref="4">
    <original>N</original>
    <variation>K</variation>
    <location>
        <position position="784"/>
    </location>
</feature>
<feature type="sequence conflict" description="In Ref. 5; AAA23443." evidence="29" ref="5">
    <original>A</original>
    <variation>R</variation>
    <location>
        <position position="838"/>
    </location>
</feature>
<feature type="sequence conflict" description="In Ref. 4; CAA47818." evidence="29" ref="4">
    <original>P</original>
    <variation>R</variation>
    <location>
        <position position="905"/>
    </location>
</feature>
<feature type="sequence conflict" description="In Ref. 7; AAA03347." evidence="29" ref="7">
    <original>H</original>
    <variation>R</variation>
    <location>
        <position position="1048"/>
    </location>
</feature>
<feature type="strand" evidence="32">
    <location>
        <begin position="2"/>
        <end position="7"/>
    </location>
</feature>
<feature type="strand" evidence="35">
    <location>
        <begin position="10"/>
        <end position="12"/>
    </location>
</feature>
<feature type="strand" evidence="32">
    <location>
        <begin position="14"/>
        <end position="20"/>
    </location>
</feature>
<feature type="strand" evidence="32">
    <location>
        <begin position="23"/>
        <end position="30"/>
    </location>
</feature>
<feature type="strand" evidence="32">
    <location>
        <begin position="32"/>
        <end position="34"/>
    </location>
</feature>
<feature type="strand" evidence="30">
    <location>
        <begin position="36"/>
        <end position="39"/>
    </location>
</feature>
<feature type="strand" evidence="31">
    <location>
        <begin position="42"/>
        <end position="50"/>
    </location>
</feature>
<feature type="helix" evidence="31">
    <location>
        <begin position="51"/>
        <end position="53"/>
    </location>
</feature>
<feature type="strand" evidence="31">
    <location>
        <begin position="55"/>
        <end position="64"/>
    </location>
</feature>
<feature type="strand" evidence="31">
    <location>
        <begin position="66"/>
        <end position="69"/>
    </location>
</feature>
<feature type="helix" evidence="31">
    <location>
        <begin position="70"/>
        <end position="72"/>
    </location>
</feature>
<feature type="helix" evidence="31">
    <location>
        <begin position="75"/>
        <end position="77"/>
    </location>
</feature>
<feature type="strand" evidence="31">
    <location>
        <begin position="84"/>
        <end position="86"/>
    </location>
</feature>
<feature type="helix" evidence="31">
    <location>
        <begin position="90"/>
        <end position="92"/>
    </location>
</feature>
<feature type="strand" evidence="31">
    <location>
        <begin position="99"/>
        <end position="106"/>
    </location>
</feature>
<feature type="strand" evidence="38">
    <location>
        <begin position="109"/>
        <end position="112"/>
    </location>
</feature>
<feature type="strand" evidence="31">
    <location>
        <begin position="115"/>
        <end position="118"/>
    </location>
</feature>
<feature type="strand" evidence="32">
    <location>
        <begin position="125"/>
        <end position="130"/>
    </location>
</feature>
<feature type="strand" evidence="33">
    <location>
        <begin position="134"/>
        <end position="136"/>
    </location>
</feature>
<feature type="strand" evidence="38">
    <location>
        <begin position="137"/>
        <end position="139"/>
    </location>
</feature>
<feature type="turn" evidence="36">
    <location>
        <begin position="145"/>
        <end position="148"/>
    </location>
</feature>
<feature type="helix" evidence="32">
    <location>
        <begin position="151"/>
        <end position="155"/>
    </location>
</feature>
<feature type="strand" evidence="32">
    <location>
        <begin position="165"/>
        <end position="168"/>
    </location>
</feature>
<feature type="helix" evidence="32">
    <location>
        <begin position="170"/>
        <end position="174"/>
    </location>
</feature>
<feature type="helix" evidence="32">
    <location>
        <begin position="177"/>
        <end position="199"/>
    </location>
</feature>
<feature type="strand" evidence="32">
    <location>
        <begin position="205"/>
        <end position="208"/>
    </location>
</feature>
<feature type="strand" evidence="35">
    <location>
        <begin position="210"/>
        <end position="212"/>
    </location>
</feature>
<feature type="helix" evidence="32">
    <location>
        <begin position="213"/>
        <end position="221"/>
    </location>
</feature>
<feature type="strand" evidence="32">
    <location>
        <begin position="226"/>
        <end position="232"/>
    </location>
</feature>
<feature type="helix" evidence="32">
    <location>
        <begin position="234"/>
        <end position="246"/>
    </location>
</feature>
<feature type="helix" evidence="32">
    <location>
        <begin position="250"/>
        <end position="255"/>
    </location>
</feature>
<feature type="strand" evidence="32">
    <location>
        <begin position="256"/>
        <end position="258"/>
    </location>
</feature>
<feature type="helix" evidence="32">
    <location>
        <begin position="265"/>
        <end position="268"/>
    </location>
</feature>
<feature type="helix" evidence="32">
    <location>
        <begin position="272"/>
        <end position="277"/>
    </location>
</feature>
<feature type="strand" evidence="32">
    <location>
        <begin position="281"/>
        <end position="284"/>
    </location>
</feature>
<feature type="strand" evidence="32">
    <location>
        <begin position="290"/>
        <end position="295"/>
    </location>
</feature>
<feature type="strand" evidence="32">
    <location>
        <begin position="300"/>
        <end position="305"/>
    </location>
</feature>
<feature type="strand" evidence="38">
    <location>
        <begin position="311"/>
        <end position="313"/>
    </location>
</feature>
<feature type="helix" evidence="32">
    <location>
        <begin position="315"/>
        <end position="336"/>
    </location>
</feature>
<feature type="strand" evidence="32">
    <location>
        <begin position="341"/>
        <end position="346"/>
    </location>
</feature>
<feature type="helix" evidence="32">
    <location>
        <begin position="353"/>
        <end position="366"/>
    </location>
</feature>
<feature type="turn" evidence="32">
    <location>
        <begin position="367"/>
        <end position="369"/>
    </location>
</feature>
<feature type="strand" evidence="32">
    <location>
        <begin position="374"/>
        <end position="379"/>
    </location>
</feature>
<feature type="strand" evidence="32">
    <location>
        <begin position="383"/>
        <end position="389"/>
    </location>
</feature>
<feature type="helix" evidence="32">
    <location>
        <begin position="396"/>
        <end position="400"/>
    </location>
</feature>
<feature type="strand" evidence="38">
    <location>
        <begin position="401"/>
        <end position="403"/>
    </location>
</feature>
<feature type="strand" evidence="32">
    <location>
        <begin position="405"/>
        <end position="411"/>
    </location>
</feature>
<feature type="helix" evidence="32">
    <location>
        <begin position="416"/>
        <end position="432"/>
    </location>
</feature>
<feature type="strand" evidence="38">
    <location>
        <begin position="433"/>
        <end position="435"/>
    </location>
</feature>
<feature type="strand" evidence="32">
    <location>
        <begin position="436"/>
        <end position="443"/>
    </location>
</feature>
<feature type="helix" evidence="32">
    <location>
        <begin position="445"/>
        <end position="451"/>
    </location>
</feature>
<feature type="turn" evidence="32">
    <location>
        <begin position="452"/>
        <end position="455"/>
    </location>
</feature>
<feature type="helix" evidence="32">
    <location>
        <begin position="456"/>
        <end position="465"/>
    </location>
</feature>
<feature type="turn" evidence="32">
    <location>
        <begin position="466"/>
        <end position="468"/>
    </location>
</feature>
<feature type="strand" evidence="32">
    <location>
        <begin position="470"/>
        <end position="475"/>
    </location>
</feature>
<feature type="strand" evidence="32">
    <location>
        <begin position="485"/>
        <end position="490"/>
    </location>
</feature>
<feature type="turn" evidence="33">
    <location>
        <begin position="491"/>
        <end position="493"/>
    </location>
</feature>
<feature type="helix" evidence="32">
    <location>
        <begin position="499"/>
        <end position="501"/>
    </location>
</feature>
<feature type="helix" evidence="32">
    <location>
        <begin position="502"/>
        <end position="506"/>
    </location>
</feature>
<feature type="turn" evidence="32">
    <location>
        <begin position="507"/>
        <end position="509"/>
    </location>
</feature>
<feature type="helix" evidence="37">
    <location>
        <begin position="831"/>
        <end position="833"/>
    </location>
</feature>
<feature type="helix" evidence="34">
    <location>
        <begin position="835"/>
        <end position="838"/>
    </location>
</feature>
<keyword id="KW-0002">3D-structure</keyword>
<keyword id="KW-0997">Cell inner membrane</keyword>
<keyword id="KW-1003">Cell membrane</keyword>
<keyword id="KW-0963">Cytoplasm</keyword>
<keyword id="KW-0903">Direct protein sequencing</keyword>
<keyword id="KW-0255">Endonuclease</keyword>
<keyword id="KW-0378">Hydrolase</keyword>
<keyword id="KW-0460">Magnesium</keyword>
<keyword id="KW-0472">Membrane</keyword>
<keyword id="KW-0479">Metal-binding</keyword>
<keyword id="KW-0540">Nuclease</keyword>
<keyword id="KW-1185">Reference proteome</keyword>
<keyword id="KW-0694">RNA-binding</keyword>
<keyword id="KW-0698">rRNA processing</keyword>
<keyword id="KW-0699">rRNA-binding</keyword>
<keyword id="KW-0819">tRNA processing</keyword>
<keyword id="KW-0820">tRNA-binding</keyword>
<keyword id="KW-0862">Zinc</keyword>
<proteinExistence type="evidence at protein level"/>
<dbReference type="EC" id="3.1.26.12" evidence="1"/>
<dbReference type="EMBL" id="U00096">
    <property type="protein sequence ID" value="AAC74168.1"/>
    <property type="molecule type" value="Genomic_DNA"/>
</dbReference>
<dbReference type="EMBL" id="AP009048">
    <property type="protein sequence ID" value="BAA35893.1"/>
    <property type="molecule type" value="Genomic_DNA"/>
</dbReference>
<dbReference type="EMBL" id="X67470">
    <property type="protein sequence ID" value="CAA47818.1"/>
    <property type="status" value="ALT_FRAME"/>
    <property type="molecule type" value="Genomic_DNA"/>
</dbReference>
<dbReference type="EMBL" id="M62747">
    <property type="protein sequence ID" value="AAA23443.1"/>
    <property type="status" value="ALT_FRAME"/>
    <property type="molecule type" value="Genomic_DNA"/>
</dbReference>
<dbReference type="EMBL" id="X54309">
    <property type="protein sequence ID" value="CAA38206.1"/>
    <property type="status" value="ALT_FRAME"/>
    <property type="molecule type" value="Genomic_DNA"/>
</dbReference>
<dbReference type="EMBL" id="L23942">
    <property type="protein sequence ID" value="AAA03347.1"/>
    <property type="molecule type" value="Genomic_DNA"/>
</dbReference>
<dbReference type="PIR" id="A64852">
    <property type="entry name" value="S27311"/>
</dbReference>
<dbReference type="RefSeq" id="NP_415602.1">
    <property type="nucleotide sequence ID" value="NC_000913.3"/>
</dbReference>
<dbReference type="RefSeq" id="WP_000827360.1">
    <property type="nucleotide sequence ID" value="NZ_LN832404.1"/>
</dbReference>
<dbReference type="PDB" id="1SLJ">
    <property type="method" value="NMR"/>
    <property type="chains" value="A=35-125"/>
</dbReference>
<dbReference type="PDB" id="1SMX">
    <property type="method" value="X-ray"/>
    <property type="resolution" value="1.80 A"/>
    <property type="chains" value="A/B=35-125"/>
</dbReference>
<dbReference type="PDB" id="1SN8">
    <property type="method" value="X-ray"/>
    <property type="resolution" value="2.00 A"/>
    <property type="chains" value="A/B=35-125"/>
</dbReference>
<dbReference type="PDB" id="2BX2">
    <property type="method" value="X-ray"/>
    <property type="resolution" value="2.85 A"/>
    <property type="chains" value="L=1-510"/>
</dbReference>
<dbReference type="PDB" id="2C0B">
    <property type="method" value="X-ray"/>
    <property type="resolution" value="3.18 A"/>
    <property type="chains" value="L=1-510"/>
</dbReference>
<dbReference type="PDB" id="2C4R">
    <property type="method" value="X-ray"/>
    <property type="resolution" value="3.60 A"/>
    <property type="chains" value="L=1-510"/>
</dbReference>
<dbReference type="PDB" id="2FYM">
    <property type="method" value="X-ray"/>
    <property type="resolution" value="1.60 A"/>
    <property type="chains" value="B/E=833-850"/>
</dbReference>
<dbReference type="PDB" id="2VMK">
    <property type="method" value="X-ray"/>
    <property type="resolution" value="3.30 A"/>
    <property type="chains" value="A/B/C/D=1-515"/>
</dbReference>
<dbReference type="PDB" id="2VRT">
    <property type="method" value="X-ray"/>
    <property type="resolution" value="3.50 A"/>
    <property type="chains" value="A/B/C/D=1-509"/>
</dbReference>
<dbReference type="PDB" id="3GCM">
    <property type="method" value="X-ray"/>
    <property type="resolution" value="2.50 A"/>
    <property type="chains" value="D/E/F=1021-1061"/>
</dbReference>
<dbReference type="PDB" id="3GME">
    <property type="method" value="X-ray"/>
    <property type="resolution" value="2.40 A"/>
    <property type="chains" value="D=1021-1061"/>
</dbReference>
<dbReference type="PDB" id="3H1C">
    <property type="method" value="X-ray"/>
    <property type="resolution" value="3.57 A"/>
    <property type="chains" value="D/E/F/H/J/L/N/P/S/U/W/Y=1021-1061"/>
</dbReference>
<dbReference type="PDB" id="3H8A">
    <property type="method" value="X-ray"/>
    <property type="resolution" value="1.90 A"/>
    <property type="chains" value="E/F=823-850"/>
</dbReference>
<dbReference type="PDB" id="5F6C">
    <property type="method" value="X-ray"/>
    <property type="resolution" value="3.00 A"/>
    <property type="chains" value="A=1-510, B=1-511"/>
</dbReference>
<dbReference type="PDB" id="6G63">
    <property type="method" value="X-ray"/>
    <property type="resolution" value="3.95 A"/>
    <property type="chains" value="A/G/L/N=1-510"/>
</dbReference>
<dbReference type="PDB" id="8B0J">
    <property type="method" value="EM"/>
    <property type="resolution" value="3.99 A"/>
    <property type="chains" value="L/N=1-598"/>
</dbReference>
<dbReference type="PDBsum" id="1SLJ"/>
<dbReference type="PDBsum" id="1SMX"/>
<dbReference type="PDBsum" id="1SN8"/>
<dbReference type="PDBsum" id="2BX2"/>
<dbReference type="PDBsum" id="2C0B"/>
<dbReference type="PDBsum" id="2C4R"/>
<dbReference type="PDBsum" id="2FYM"/>
<dbReference type="PDBsum" id="2VMK"/>
<dbReference type="PDBsum" id="2VRT"/>
<dbReference type="PDBsum" id="3GCM"/>
<dbReference type="PDBsum" id="3GME"/>
<dbReference type="PDBsum" id="3H1C"/>
<dbReference type="PDBsum" id="3H8A"/>
<dbReference type="PDBsum" id="5F6C"/>
<dbReference type="PDBsum" id="6G63"/>
<dbReference type="PDBsum" id="8B0J"/>
<dbReference type="BMRB" id="P21513"/>
<dbReference type="EMDB" id="EMD-15785"/>
<dbReference type="SASBDB" id="P21513"/>
<dbReference type="SMR" id="P21513"/>
<dbReference type="BioGRID" id="4261023">
    <property type="interactions" value="255"/>
</dbReference>
<dbReference type="BioGRID" id="850013">
    <property type="interactions" value="1"/>
</dbReference>
<dbReference type="ComplexPortal" id="CPX-403">
    <property type="entry name" value="RNA degradosome"/>
</dbReference>
<dbReference type="DIP" id="DIP-10727N"/>
<dbReference type="FunCoup" id="P21513">
    <property type="interactions" value="307"/>
</dbReference>
<dbReference type="IntAct" id="P21513">
    <property type="interactions" value="63"/>
</dbReference>
<dbReference type="MINT" id="P21513"/>
<dbReference type="STRING" id="511145.b1084"/>
<dbReference type="jPOST" id="P21513"/>
<dbReference type="PaxDb" id="511145-b1084"/>
<dbReference type="EnsemblBacteria" id="AAC74168">
    <property type="protein sequence ID" value="AAC74168"/>
    <property type="gene ID" value="b1084"/>
</dbReference>
<dbReference type="GeneID" id="945641"/>
<dbReference type="KEGG" id="ecj:JW1071"/>
<dbReference type="KEGG" id="eco:b1084"/>
<dbReference type="KEGG" id="ecoc:C3026_06565"/>
<dbReference type="PATRIC" id="fig|1411691.4.peg.1184"/>
<dbReference type="EchoBASE" id="EB0852"/>
<dbReference type="eggNOG" id="COG1530">
    <property type="taxonomic scope" value="Bacteria"/>
</dbReference>
<dbReference type="HOGENOM" id="CLU_003468_1_2_6"/>
<dbReference type="InParanoid" id="P21513"/>
<dbReference type="OMA" id="SDWVRPA"/>
<dbReference type="OrthoDB" id="9804278at2"/>
<dbReference type="PhylomeDB" id="P21513"/>
<dbReference type="BioCyc" id="EcoCyc:EG10859-MONOMER"/>
<dbReference type="BioCyc" id="MetaCyc:EG10859-MONOMER"/>
<dbReference type="BRENDA" id="3.1.26.12">
    <property type="organism ID" value="2026"/>
</dbReference>
<dbReference type="EvolutionaryTrace" id="P21513"/>
<dbReference type="PRO" id="PR:P21513"/>
<dbReference type="Proteomes" id="UP000000625">
    <property type="component" value="Chromosome"/>
</dbReference>
<dbReference type="GO" id="GO:1990061">
    <property type="term" value="C:bacterial degradosome"/>
    <property type="evidence" value="ECO:0000314"/>
    <property type="project" value="EcoCyc"/>
</dbReference>
<dbReference type="GO" id="GO:0005737">
    <property type="term" value="C:cytoplasm"/>
    <property type="evidence" value="ECO:0000318"/>
    <property type="project" value="GO_Central"/>
</dbReference>
<dbReference type="GO" id="GO:0009898">
    <property type="term" value="C:cytoplasmic side of plasma membrane"/>
    <property type="evidence" value="ECO:0000270"/>
    <property type="project" value="EcoCyc"/>
</dbReference>
<dbReference type="GO" id="GO:1902555">
    <property type="term" value="C:endoribonuclease complex"/>
    <property type="evidence" value="ECO:0000314"/>
    <property type="project" value="EcoCyc"/>
</dbReference>
<dbReference type="GO" id="GO:0016020">
    <property type="term" value="C:membrane"/>
    <property type="evidence" value="ECO:0000314"/>
    <property type="project" value="ComplexPortal"/>
</dbReference>
<dbReference type="GO" id="GO:0008312">
    <property type="term" value="F:7S RNA binding"/>
    <property type="evidence" value="ECO:0000315"/>
    <property type="project" value="CAFA"/>
</dbReference>
<dbReference type="GO" id="GO:0017151">
    <property type="term" value="F:DEAD/H-box RNA helicase binding"/>
    <property type="evidence" value="ECO:0000353"/>
    <property type="project" value="CAFA"/>
</dbReference>
<dbReference type="GO" id="GO:0042802">
    <property type="term" value="F:identical protein binding"/>
    <property type="evidence" value="ECO:0000353"/>
    <property type="project" value="IntAct"/>
</dbReference>
<dbReference type="GO" id="GO:0000287">
    <property type="term" value="F:magnesium ion binding"/>
    <property type="evidence" value="ECO:0000315"/>
    <property type="project" value="EcoCyc"/>
</dbReference>
<dbReference type="GO" id="GO:0060090">
    <property type="term" value="F:molecular adaptor activity"/>
    <property type="evidence" value="ECO:0000269"/>
    <property type="project" value="DisProt"/>
</dbReference>
<dbReference type="GO" id="GO:0008995">
    <property type="term" value="F:ribonuclease E activity"/>
    <property type="evidence" value="ECO:0000314"/>
    <property type="project" value="EcoCyc"/>
</dbReference>
<dbReference type="GO" id="GO:0003723">
    <property type="term" value="F:RNA binding"/>
    <property type="evidence" value="ECO:0000315"/>
    <property type="project" value="CAFA"/>
</dbReference>
<dbReference type="GO" id="GO:0004521">
    <property type="term" value="F:RNA endonuclease activity"/>
    <property type="evidence" value="ECO:0007669"/>
    <property type="project" value="UniProtKB-UniRule"/>
</dbReference>
<dbReference type="GO" id="GO:0004540">
    <property type="term" value="F:RNA nuclease activity"/>
    <property type="evidence" value="ECO:0000318"/>
    <property type="project" value="GO_Central"/>
</dbReference>
<dbReference type="GO" id="GO:0019843">
    <property type="term" value="F:rRNA binding"/>
    <property type="evidence" value="ECO:0007669"/>
    <property type="project" value="UniProtKB-KW"/>
</dbReference>
<dbReference type="GO" id="GO:0000049">
    <property type="term" value="F:tRNA binding"/>
    <property type="evidence" value="ECO:0007669"/>
    <property type="project" value="UniProtKB-KW"/>
</dbReference>
<dbReference type="GO" id="GO:0008270">
    <property type="term" value="F:zinc ion binding"/>
    <property type="evidence" value="ECO:0007669"/>
    <property type="project" value="UniProtKB-UniRule"/>
</dbReference>
<dbReference type="GO" id="GO:0006402">
    <property type="term" value="P:mRNA catabolic process"/>
    <property type="evidence" value="ECO:0000315"/>
    <property type="project" value="EcoCyc"/>
</dbReference>
<dbReference type="GO" id="GO:0051259">
    <property type="term" value="P:protein complex oligomerization"/>
    <property type="evidence" value="ECO:0000353"/>
    <property type="project" value="DisProt"/>
</dbReference>
<dbReference type="GO" id="GO:0051289">
    <property type="term" value="P:protein homotetramerization"/>
    <property type="evidence" value="ECO:0000353"/>
    <property type="project" value="EcoCyc"/>
</dbReference>
<dbReference type="GO" id="GO:1902280">
    <property type="term" value="P:regulation of RNA helicase activity"/>
    <property type="evidence" value="ECO:0000315"/>
    <property type="project" value="CAFA"/>
</dbReference>
<dbReference type="GO" id="GO:0006401">
    <property type="term" value="P:RNA catabolic process"/>
    <property type="evidence" value="ECO:0000314"/>
    <property type="project" value="EcoCyc"/>
</dbReference>
<dbReference type="GO" id="GO:0006396">
    <property type="term" value="P:RNA processing"/>
    <property type="evidence" value="ECO:0000303"/>
    <property type="project" value="ComplexPortal"/>
</dbReference>
<dbReference type="GO" id="GO:0000967">
    <property type="term" value="P:rRNA 5'-end processing"/>
    <property type="evidence" value="ECO:0000315"/>
    <property type="project" value="EcoCyc"/>
</dbReference>
<dbReference type="GO" id="GO:0006364">
    <property type="term" value="P:rRNA processing"/>
    <property type="evidence" value="ECO:0000318"/>
    <property type="project" value="GO_Central"/>
</dbReference>
<dbReference type="GO" id="GO:0008033">
    <property type="term" value="P:tRNA processing"/>
    <property type="evidence" value="ECO:0000315"/>
    <property type="project" value="EcoCyc"/>
</dbReference>
<dbReference type="CDD" id="cd04453">
    <property type="entry name" value="S1_RNase_E"/>
    <property type="match status" value="1"/>
</dbReference>
<dbReference type="DisProt" id="DP00207"/>
<dbReference type="FunFam" id="2.40.50.140:FF:000040">
    <property type="entry name" value="Ribonuclease E"/>
    <property type="match status" value="1"/>
</dbReference>
<dbReference type="FunFam" id="3.40.1260.20:FF:000002">
    <property type="entry name" value="Ribonuclease E"/>
    <property type="match status" value="1"/>
</dbReference>
<dbReference type="Gene3D" id="2.40.50.140">
    <property type="entry name" value="Nucleic acid-binding proteins"/>
    <property type="match status" value="1"/>
</dbReference>
<dbReference type="Gene3D" id="3.40.1260.20">
    <property type="entry name" value="Ribonuclease E, catalytic domain"/>
    <property type="match status" value="1"/>
</dbReference>
<dbReference type="HAMAP" id="MF_00970">
    <property type="entry name" value="RNase_E"/>
    <property type="match status" value="1"/>
</dbReference>
<dbReference type="InterPro" id="IPR012340">
    <property type="entry name" value="NA-bd_OB-fold"/>
</dbReference>
<dbReference type="InterPro" id="IPR021968">
    <property type="entry name" value="PNPase_C"/>
</dbReference>
<dbReference type="InterPro" id="IPR019307">
    <property type="entry name" value="RNA-bd_AU-1/RNase_E/G"/>
</dbReference>
<dbReference type="InterPro" id="IPR028878">
    <property type="entry name" value="RNase_E"/>
</dbReference>
<dbReference type="InterPro" id="IPR004659">
    <property type="entry name" value="RNase_E/G"/>
</dbReference>
<dbReference type="InterPro" id="IPR048583">
    <property type="entry name" value="RNase_E_G_thioredoxin-like"/>
</dbReference>
<dbReference type="InterPro" id="IPR003029">
    <property type="entry name" value="S1_domain"/>
</dbReference>
<dbReference type="NCBIfam" id="NF008074">
    <property type="entry name" value="PRK10811.1"/>
    <property type="match status" value="1"/>
</dbReference>
<dbReference type="NCBIfam" id="TIGR00757">
    <property type="entry name" value="RNaseEG"/>
    <property type="match status" value="1"/>
</dbReference>
<dbReference type="PANTHER" id="PTHR30001">
    <property type="entry name" value="RIBONUCLEASE"/>
    <property type="match status" value="1"/>
</dbReference>
<dbReference type="PANTHER" id="PTHR30001:SF1">
    <property type="entry name" value="RIBONUCLEASE E_G-LIKE PROTEIN, CHLOROPLASTIC"/>
    <property type="match status" value="1"/>
</dbReference>
<dbReference type="Pfam" id="PF12111">
    <property type="entry name" value="PNPase_C"/>
    <property type="match status" value="1"/>
</dbReference>
<dbReference type="Pfam" id="PF10150">
    <property type="entry name" value="RNase_E_G"/>
    <property type="match status" value="1"/>
</dbReference>
<dbReference type="Pfam" id="PF20833">
    <property type="entry name" value="RNase_E_G_Thio"/>
    <property type="match status" value="1"/>
</dbReference>
<dbReference type="Pfam" id="PF00575">
    <property type="entry name" value="S1"/>
    <property type="match status" value="1"/>
</dbReference>
<dbReference type="SMART" id="SM00316">
    <property type="entry name" value="S1"/>
    <property type="match status" value="1"/>
</dbReference>
<dbReference type="SUPFAM" id="SSF50249">
    <property type="entry name" value="Nucleic acid-binding proteins"/>
    <property type="match status" value="1"/>
</dbReference>
<dbReference type="PROSITE" id="PS50126">
    <property type="entry name" value="S1"/>
    <property type="match status" value="1"/>
</dbReference>
<protein>
    <recommendedName>
        <fullName evidence="1">Ribonuclease E</fullName>
        <shortName evidence="1">RNase E</shortName>
        <ecNumber evidence="1">3.1.26.12</ecNumber>
    </recommendedName>
</protein>